<proteinExistence type="evidence at protein level"/>
<organism>
    <name type="scientific">Naja haje haje</name>
    <name type="common">Egyptian cobra</name>
    <dbReference type="NCBI Taxonomy" id="8642"/>
    <lineage>
        <taxon>Eukaryota</taxon>
        <taxon>Metazoa</taxon>
        <taxon>Chordata</taxon>
        <taxon>Craniata</taxon>
        <taxon>Vertebrata</taxon>
        <taxon>Euteleostomi</taxon>
        <taxon>Lepidosauria</taxon>
        <taxon>Squamata</taxon>
        <taxon>Bifurcata</taxon>
        <taxon>Unidentata</taxon>
        <taxon>Episquamata</taxon>
        <taxon>Toxicofera</taxon>
        <taxon>Serpentes</taxon>
        <taxon>Colubroidea</taxon>
        <taxon>Elapidae</taxon>
        <taxon>Elapinae</taxon>
        <taxon>Naja</taxon>
    </lineage>
</organism>
<reference evidence="5" key="1">
    <citation type="journal article" date="2005" name="Biochem. Biophys. Res. Commun.">
        <title>Cobra venom contains a pool of cysteine-rich secretory proteins.</title>
        <authorList>
            <person name="Osipov A.V."/>
            <person name="Levashov M.Y."/>
            <person name="Tsetlin V.I."/>
            <person name="Utkin Y.N."/>
        </authorList>
    </citation>
    <scope>PROTEIN SEQUENCE</scope>
    <scope>SUBCELLULAR LOCATION</scope>
    <scope>TISSUE SPECIFICITY</scope>
    <scope>MASS SPECTROMETRY</scope>
    <source>
        <tissue evidence="3">Venom</tissue>
    </source>
</reference>
<protein>
    <recommendedName>
        <fullName>Cysteine-rich venom protein 25-A</fullName>
    </recommendedName>
    <alternativeName>
        <fullName>CRVP-25h-A</fullName>
    </alternativeName>
</protein>
<dbReference type="SMR" id="P84807"/>
<dbReference type="GO" id="GO:0005576">
    <property type="term" value="C:extracellular region"/>
    <property type="evidence" value="ECO:0000314"/>
    <property type="project" value="UniProtKB"/>
</dbReference>
<dbReference type="GO" id="GO:0090729">
    <property type="term" value="F:toxin activity"/>
    <property type="evidence" value="ECO:0007669"/>
    <property type="project" value="UniProtKB-KW"/>
</dbReference>
<dbReference type="GO" id="GO:0006952">
    <property type="term" value="P:defense response"/>
    <property type="evidence" value="ECO:0000314"/>
    <property type="project" value="UniProtKB"/>
</dbReference>
<evidence type="ECO:0000250" key="1">
    <source>
        <dbReference type="UniProtKB" id="P84808"/>
    </source>
</evidence>
<evidence type="ECO:0000255" key="2"/>
<evidence type="ECO:0000269" key="3">
    <source>
    </source>
</evidence>
<evidence type="ECO:0000303" key="4">
    <source>
    </source>
</evidence>
<evidence type="ECO:0000305" key="5"/>
<sequence>DVDFNSESTRRKNKQKEIVDLHNSLKKTV</sequence>
<feature type="chain" id="PRO_0000231637" description="Cysteine-rich venom protein 25-A">
    <location>
        <begin position="1"/>
        <end position="29" status="greater than"/>
    </location>
</feature>
<feature type="non-terminal residue" evidence="4">
    <location>
        <position position="29"/>
    </location>
</feature>
<accession>P84807</accession>
<comment type="subcellular location">
    <subcellularLocation>
        <location evidence="3">Secreted</location>
    </subcellularLocation>
</comment>
<comment type="tissue specificity">
    <text evidence="3">Expressed by the venom gland.</text>
</comment>
<comment type="PTM">
    <text evidence="1">Contains 8 disulfide bonds.</text>
</comment>
<comment type="mass spectrometry"/>
<comment type="miscellaneous">
    <text evidence="3">Not toxic when administered to crickets at doses up to 5 nmol/g.</text>
</comment>
<comment type="similarity">
    <text evidence="2">Belongs to the CRISP family.</text>
</comment>
<name>CRVPA_NAJHH</name>
<keyword id="KW-0903">Direct protein sequencing</keyword>
<keyword id="KW-1015">Disulfide bond</keyword>
<keyword id="KW-0964">Secreted</keyword>
<keyword id="KW-0800">Toxin</keyword>